<reference key="1">
    <citation type="journal article" date="2002" name="Arch. Biochem. Biophys.">
        <title>A novel prothrombin activator from the venom of Micropechis ikaheka: isolation and characterization.</title>
        <authorList>
            <person name="Gao R."/>
            <person name="Kini R.M."/>
            <person name="Gopalakrishnakone P."/>
        </authorList>
    </citation>
    <scope>PROTEIN SEQUENCE</scope>
    <scope>FUNCTION</scope>
    <scope>ACTIVITY REGULATION</scope>
    <scope>SUBUNIT</scope>
    <source>
        <tissue>Venom</tissue>
    </source>
</reference>
<reference key="2">
    <citation type="journal article" date="2013" name="Proc. Natl. Acad. Sci. U.S.A.">
        <title>The king cobra genome reveals dynamic gene evolution and adaptation in the snake venom system.</title>
        <authorList>
            <person name="Vonk F.J."/>
            <person name="Casewell N.R."/>
            <person name="Henkel C.V."/>
            <person name="Heimberg A.M."/>
            <person name="Jansen H.J."/>
            <person name="McCleary R.J."/>
            <person name="Kerkkamp H.M."/>
            <person name="Vos R.A."/>
            <person name="Guerreiro I."/>
            <person name="Calvete J.J."/>
            <person name="Wuster W."/>
            <person name="Woods A.E."/>
            <person name="Logan J.M."/>
            <person name="Harrison R.A."/>
            <person name="Castoe T.A."/>
            <person name="de Koning A.P."/>
            <person name="Pollock D.D."/>
            <person name="Yandell M."/>
            <person name="Calderon D."/>
            <person name="Renjifo C."/>
            <person name="Currier R.B."/>
            <person name="Salgado D."/>
            <person name="Pla D."/>
            <person name="Sanz L."/>
            <person name="Hyder A.S."/>
            <person name="Ribeiro J.M."/>
            <person name="Arntzen J.W."/>
            <person name="van den Thillart G.E."/>
            <person name="Boetzer M."/>
            <person name="Pirovano W."/>
            <person name="Dirks R.P."/>
            <person name="Spaink H.P."/>
            <person name="Duboule D."/>
            <person name="McGlinn E."/>
            <person name="Kini R.M."/>
            <person name="Richardson M.K."/>
        </authorList>
    </citation>
    <scope>IDENTIFICATION BY MASS SPECTROMETRY</scope>
    <source>
        <tissue>Venom</tissue>
    </source>
</reference>
<comment type="function">
    <text evidence="4">Snake venom zinc metalloproteinase that calcium-independently catalyzes the conversion of prothrombin (F2) to alpha-thrombin through the formation of a thrombin intermediate.</text>
</comment>
<comment type="cofactor">
    <cofactor evidence="1">
        <name>Zn(2+)</name>
        <dbReference type="ChEBI" id="CHEBI:29105"/>
    </cofactor>
    <text evidence="1">Binds 1 zinc ion per subunit.</text>
</comment>
<comment type="activity regulation">
    <text evidence="4">Inhibited by EDTA, but not by PMSF.</text>
</comment>
<comment type="subunit">
    <text evidence="4">Monomer.</text>
</comment>
<comment type="subcellular location">
    <subcellularLocation>
        <location>Secreted</location>
    </subcellularLocation>
</comment>
<comment type="tissue specificity">
    <text>Expressed by the venom gland.</text>
</comment>
<comment type="miscellaneous">
    <text evidence="6">Negative results: does not have an affect on factor X (F10) and fibrinogen.</text>
</comment>
<comment type="similarity">
    <text evidence="5">Belongs to the venom metalloproteinase (M12B) family. P-III subfamily. P-IIIa sub-subfamily.</text>
</comment>
<protein>
    <recommendedName>
        <fullName>Zinc metalloproteinase-disintegrin-like mikarin</fullName>
        <ecNumber>3.4.24.-</ecNumber>
    </recommendedName>
    <alternativeName>
        <fullName>Snake venom metalloproteinase</fullName>
        <shortName>SVMP</shortName>
    </alternativeName>
</protein>
<sequence length="169" mass="18439">TNTPEQDRYLQVKKYLEYVVVDNNMYRNYGNAGPCVMSAEISFEPLQEFSSCDIQEPLSQDIVQPAVCGNYYVEVGGECDCGSPKPCRSACCNAATCKLQREHQCDSGECCEKKDDCDLPEICTGRSAKCSCVISQGDLGYGMVEPGTKCTDGMVCSNEQCVDVQTAAK</sequence>
<proteinExistence type="evidence at protein level"/>
<accession>P0DJ43</accession>
<dbReference type="EC" id="3.4.24.-"/>
<dbReference type="GO" id="GO:0005576">
    <property type="term" value="C:extracellular region"/>
    <property type="evidence" value="ECO:0000303"/>
    <property type="project" value="UniProtKB"/>
</dbReference>
<dbReference type="GO" id="GO:0043655">
    <property type="term" value="C:host extracellular space"/>
    <property type="evidence" value="ECO:0000303"/>
    <property type="project" value="UniProtKB"/>
</dbReference>
<dbReference type="GO" id="GO:0005886">
    <property type="term" value="C:plasma membrane"/>
    <property type="evidence" value="ECO:0007669"/>
    <property type="project" value="TreeGrafter"/>
</dbReference>
<dbReference type="GO" id="GO:0046872">
    <property type="term" value="F:metal ion binding"/>
    <property type="evidence" value="ECO:0000314"/>
    <property type="project" value="UniProtKB"/>
</dbReference>
<dbReference type="GO" id="GO:0004222">
    <property type="term" value="F:metalloendopeptidase activity"/>
    <property type="evidence" value="ECO:0000314"/>
    <property type="project" value="UniProtKB"/>
</dbReference>
<dbReference type="GO" id="GO:0016504">
    <property type="term" value="F:peptidase activator activity"/>
    <property type="evidence" value="ECO:0000314"/>
    <property type="project" value="UniProtKB"/>
</dbReference>
<dbReference type="GO" id="GO:0090729">
    <property type="term" value="F:toxin activity"/>
    <property type="evidence" value="ECO:0007669"/>
    <property type="project" value="UniProtKB-KW"/>
</dbReference>
<dbReference type="GO" id="GO:0006508">
    <property type="term" value="P:proteolysis"/>
    <property type="evidence" value="ECO:0007669"/>
    <property type="project" value="UniProtKB-KW"/>
</dbReference>
<dbReference type="GO" id="GO:0044469">
    <property type="term" value="P:venom-mediated blood coagulation"/>
    <property type="evidence" value="ECO:0000314"/>
    <property type="project" value="UniProtKB"/>
</dbReference>
<dbReference type="Gene3D" id="4.10.70.10">
    <property type="entry name" value="Disintegrin domain"/>
    <property type="match status" value="1"/>
</dbReference>
<dbReference type="InterPro" id="IPR001762">
    <property type="entry name" value="Disintegrin_dom"/>
</dbReference>
<dbReference type="InterPro" id="IPR036436">
    <property type="entry name" value="Disintegrin_dom_sf"/>
</dbReference>
<dbReference type="PANTHER" id="PTHR11905">
    <property type="entry name" value="ADAM A DISINTEGRIN AND METALLOPROTEASE DOMAIN"/>
    <property type="match status" value="1"/>
</dbReference>
<dbReference type="PANTHER" id="PTHR11905:SF32">
    <property type="entry name" value="DISINTEGRIN AND METALLOPROTEINASE DOMAIN-CONTAINING PROTEIN 28"/>
    <property type="match status" value="1"/>
</dbReference>
<dbReference type="SMART" id="SM00050">
    <property type="entry name" value="DISIN"/>
    <property type="match status" value="1"/>
</dbReference>
<dbReference type="SUPFAM" id="SSF57552">
    <property type="entry name" value="Blood coagulation inhibitor (disintegrin)"/>
    <property type="match status" value="1"/>
</dbReference>
<dbReference type="SUPFAM" id="SSF55486">
    <property type="entry name" value="Metalloproteases ('zincins'), catalytic domain"/>
    <property type="match status" value="1"/>
</dbReference>
<dbReference type="PROSITE" id="PS50214">
    <property type="entry name" value="DISINTEGRIN_2"/>
    <property type="match status" value="1"/>
</dbReference>
<evidence type="ECO:0000250" key="1"/>
<evidence type="ECO:0000255" key="2">
    <source>
        <dbReference type="PROSITE-ProRule" id="PRU00068"/>
    </source>
</evidence>
<evidence type="ECO:0000255" key="3">
    <source>
        <dbReference type="PROSITE-ProRule" id="PRU00276"/>
    </source>
</evidence>
<evidence type="ECO:0000269" key="4">
    <source>
    </source>
</evidence>
<evidence type="ECO:0000305" key="5"/>
<evidence type="ECO:0000305" key="6">
    <source>
    </source>
</evidence>
<keyword id="KW-1204">Blood coagulation cascade activating toxin</keyword>
<keyword id="KW-0903">Direct protein sequencing</keyword>
<keyword id="KW-1015">Disulfide bond</keyword>
<keyword id="KW-1199">Hemostasis impairing toxin</keyword>
<keyword id="KW-0378">Hydrolase</keyword>
<keyword id="KW-0479">Metal-binding</keyword>
<keyword id="KW-0482">Metalloprotease</keyword>
<keyword id="KW-0645">Protease</keyword>
<keyword id="KW-0655">Prothrombin activator</keyword>
<keyword id="KW-0964">Secreted</keyword>
<keyword id="KW-0800">Toxin</keyword>
<keyword id="KW-0862">Zinc</keyword>
<feature type="chain" id="PRO_0000418035" description="Zinc metalloproteinase-disintegrin-like mikarin">
    <location>
        <begin position="1"/>
        <end position="169"/>
    </location>
</feature>
<feature type="domain" description="Peptidase M12B" evidence="3">
    <location>
        <begin position="14"/>
        <end position="57"/>
    </location>
</feature>
<feature type="domain" description="Disintegrin" evidence="2">
    <location>
        <begin position="65"/>
        <end position="129" status="greater than"/>
    </location>
</feature>
<feature type="short sequence motif" description="D/ECD-tripeptide">
    <location>
        <begin position="116"/>
        <end position="118"/>
    </location>
</feature>
<feature type="disulfide bond" evidence="1">
    <location>
        <begin position="68"/>
        <end position="97"/>
    </location>
</feature>
<feature type="disulfide bond" evidence="1">
    <location>
        <begin position="79"/>
        <end position="92"/>
    </location>
</feature>
<feature type="disulfide bond" evidence="1">
    <location>
        <begin position="81"/>
        <end position="87"/>
    </location>
</feature>
<feature type="disulfide bond" evidence="1">
    <location>
        <begin position="105"/>
        <end position="111"/>
    </location>
</feature>
<feature type="disulfide bond" evidence="1">
    <location>
        <begin position="110"/>
        <end position="123"/>
    </location>
</feature>
<feature type="disulfide bond" evidence="1">
    <location>
        <begin position="150"/>
        <end position="161"/>
    </location>
</feature>
<feature type="non-consecutive residues" evidence="5">
    <location>
        <begin position="30"/>
        <end position="31"/>
    </location>
</feature>
<feature type="non-consecutive residues" evidence="5">
    <location>
        <begin position="57"/>
        <end position="58"/>
    </location>
</feature>
<feature type="non-consecutive residues" evidence="5">
    <location>
        <begin position="113"/>
        <end position="114"/>
    </location>
</feature>
<feature type="non-consecutive residues" evidence="5">
    <location>
        <begin position="129"/>
        <end position="130"/>
    </location>
</feature>
<name>VM3_MICIK</name>
<organism>
    <name type="scientific">Micropechis ikaheca</name>
    <name type="common">New Guinean small-eyed snake</name>
    <dbReference type="NCBI Taxonomy" id="66188"/>
    <lineage>
        <taxon>Eukaryota</taxon>
        <taxon>Metazoa</taxon>
        <taxon>Chordata</taxon>
        <taxon>Craniata</taxon>
        <taxon>Vertebrata</taxon>
        <taxon>Euteleostomi</taxon>
        <taxon>Lepidosauria</taxon>
        <taxon>Squamata</taxon>
        <taxon>Bifurcata</taxon>
        <taxon>Unidentata</taxon>
        <taxon>Episquamata</taxon>
        <taxon>Toxicofera</taxon>
        <taxon>Serpentes</taxon>
        <taxon>Colubroidea</taxon>
        <taxon>Elapidae</taxon>
        <taxon>Notechinae</taxon>
        <taxon>Micropechis</taxon>
    </lineage>
</organism>